<evidence type="ECO:0000255" key="1">
    <source>
        <dbReference type="HAMAP-Rule" id="MF_00193"/>
    </source>
</evidence>
<protein>
    <recommendedName>
        <fullName evidence="1">NH(3)-dependent NAD(+) synthetase</fullName>
        <ecNumber evidence="1">6.3.1.5</ecNumber>
    </recommendedName>
</protein>
<gene>
    <name evidence="1" type="primary">nadE</name>
    <name type="ordered locus">Pfl01_0547</name>
</gene>
<sequence length="275" mass="29745">MQAVQREIAEQLNVQPPFADDQALEAEVARRISFIQDCLTSSGLKTLVLGISGGVDSLTAGLLAQRAMRELRERTGDEAYKFIAVRLPYDVQFDEHDAQASVDFIAPDERHTVNIGPAVKSLASEVAAFEGKHAVSVDFVLGNTKARMRMVAQYTIAGATHGLVIGTDHAAEAVMGFFTKFGDGACDLAPLSGLVKNQVRAIARSFGAPESLVEKVPTADLEDLSPGKPDEASHGVTYAEIDAFLHGEPVRQEAFDIIVNTYKKTHHKRVMPFAP</sequence>
<accession>Q3KIW5</accession>
<name>NADE_PSEPF</name>
<feature type="chain" id="PRO_1000077587" description="NH(3)-dependent NAD(+) synthetase">
    <location>
        <begin position="1"/>
        <end position="275"/>
    </location>
</feature>
<feature type="binding site" evidence="1">
    <location>
        <begin position="50"/>
        <end position="57"/>
    </location>
    <ligand>
        <name>ATP</name>
        <dbReference type="ChEBI" id="CHEBI:30616"/>
    </ligand>
</feature>
<feature type="binding site" evidence="1">
    <location>
        <position position="56"/>
    </location>
    <ligand>
        <name>Mg(2+)</name>
        <dbReference type="ChEBI" id="CHEBI:18420"/>
    </ligand>
</feature>
<feature type="binding site" evidence="1">
    <location>
        <position position="147"/>
    </location>
    <ligand>
        <name>deamido-NAD(+)</name>
        <dbReference type="ChEBI" id="CHEBI:58437"/>
    </ligand>
</feature>
<feature type="binding site" evidence="1">
    <location>
        <position position="167"/>
    </location>
    <ligand>
        <name>ATP</name>
        <dbReference type="ChEBI" id="CHEBI:30616"/>
    </ligand>
</feature>
<feature type="binding site" evidence="1">
    <location>
        <position position="172"/>
    </location>
    <ligand>
        <name>Mg(2+)</name>
        <dbReference type="ChEBI" id="CHEBI:18420"/>
    </ligand>
</feature>
<feature type="binding site" evidence="1">
    <location>
        <position position="180"/>
    </location>
    <ligand>
        <name>deamido-NAD(+)</name>
        <dbReference type="ChEBI" id="CHEBI:58437"/>
    </ligand>
</feature>
<feature type="binding site" evidence="1">
    <location>
        <position position="187"/>
    </location>
    <ligand>
        <name>deamido-NAD(+)</name>
        <dbReference type="ChEBI" id="CHEBI:58437"/>
    </ligand>
</feature>
<feature type="binding site" evidence="1">
    <location>
        <position position="196"/>
    </location>
    <ligand>
        <name>ATP</name>
        <dbReference type="ChEBI" id="CHEBI:30616"/>
    </ligand>
</feature>
<feature type="binding site" evidence="1">
    <location>
        <position position="218"/>
    </location>
    <ligand>
        <name>ATP</name>
        <dbReference type="ChEBI" id="CHEBI:30616"/>
    </ligand>
</feature>
<feature type="binding site" evidence="1">
    <location>
        <begin position="267"/>
        <end position="268"/>
    </location>
    <ligand>
        <name>deamido-NAD(+)</name>
        <dbReference type="ChEBI" id="CHEBI:58437"/>
    </ligand>
</feature>
<comment type="function">
    <text evidence="1">Catalyzes the ATP-dependent amidation of deamido-NAD to form NAD. Uses ammonia as a nitrogen source.</text>
</comment>
<comment type="catalytic activity">
    <reaction evidence="1">
        <text>deamido-NAD(+) + NH4(+) + ATP = AMP + diphosphate + NAD(+) + H(+)</text>
        <dbReference type="Rhea" id="RHEA:21188"/>
        <dbReference type="ChEBI" id="CHEBI:15378"/>
        <dbReference type="ChEBI" id="CHEBI:28938"/>
        <dbReference type="ChEBI" id="CHEBI:30616"/>
        <dbReference type="ChEBI" id="CHEBI:33019"/>
        <dbReference type="ChEBI" id="CHEBI:57540"/>
        <dbReference type="ChEBI" id="CHEBI:58437"/>
        <dbReference type="ChEBI" id="CHEBI:456215"/>
        <dbReference type="EC" id="6.3.1.5"/>
    </reaction>
</comment>
<comment type="pathway">
    <text evidence="1">Cofactor biosynthesis; NAD(+) biosynthesis; NAD(+) from deamido-NAD(+) (ammonia route): step 1/1.</text>
</comment>
<comment type="subunit">
    <text evidence="1">Homodimer.</text>
</comment>
<comment type="similarity">
    <text evidence="1">Belongs to the NAD synthetase family.</text>
</comment>
<dbReference type="EC" id="6.3.1.5" evidence="1"/>
<dbReference type="EMBL" id="CP000094">
    <property type="protein sequence ID" value="ABA72291.1"/>
    <property type="molecule type" value="Genomic_DNA"/>
</dbReference>
<dbReference type="RefSeq" id="WP_011332201.1">
    <property type="nucleotide sequence ID" value="NC_007492.2"/>
</dbReference>
<dbReference type="SMR" id="Q3KIW5"/>
<dbReference type="KEGG" id="pfo:Pfl01_0547"/>
<dbReference type="eggNOG" id="COG0171">
    <property type="taxonomic scope" value="Bacteria"/>
</dbReference>
<dbReference type="HOGENOM" id="CLU_059327_3_0_6"/>
<dbReference type="UniPathway" id="UPA00253">
    <property type="reaction ID" value="UER00333"/>
</dbReference>
<dbReference type="Proteomes" id="UP000002704">
    <property type="component" value="Chromosome"/>
</dbReference>
<dbReference type="GO" id="GO:0005737">
    <property type="term" value="C:cytoplasm"/>
    <property type="evidence" value="ECO:0007669"/>
    <property type="project" value="InterPro"/>
</dbReference>
<dbReference type="GO" id="GO:0005524">
    <property type="term" value="F:ATP binding"/>
    <property type="evidence" value="ECO:0007669"/>
    <property type="project" value="UniProtKB-UniRule"/>
</dbReference>
<dbReference type="GO" id="GO:0004359">
    <property type="term" value="F:glutaminase activity"/>
    <property type="evidence" value="ECO:0007669"/>
    <property type="project" value="InterPro"/>
</dbReference>
<dbReference type="GO" id="GO:0046872">
    <property type="term" value="F:metal ion binding"/>
    <property type="evidence" value="ECO:0007669"/>
    <property type="project" value="UniProtKB-KW"/>
</dbReference>
<dbReference type="GO" id="GO:0003952">
    <property type="term" value="F:NAD+ synthase (glutamine-hydrolyzing) activity"/>
    <property type="evidence" value="ECO:0007669"/>
    <property type="project" value="InterPro"/>
</dbReference>
<dbReference type="GO" id="GO:0008795">
    <property type="term" value="F:NAD+ synthase activity"/>
    <property type="evidence" value="ECO:0007669"/>
    <property type="project" value="UniProtKB-UniRule"/>
</dbReference>
<dbReference type="GO" id="GO:0009435">
    <property type="term" value="P:NAD biosynthetic process"/>
    <property type="evidence" value="ECO:0007669"/>
    <property type="project" value="UniProtKB-UniRule"/>
</dbReference>
<dbReference type="CDD" id="cd00553">
    <property type="entry name" value="NAD_synthase"/>
    <property type="match status" value="1"/>
</dbReference>
<dbReference type="Gene3D" id="3.40.50.620">
    <property type="entry name" value="HUPs"/>
    <property type="match status" value="1"/>
</dbReference>
<dbReference type="HAMAP" id="MF_00193">
    <property type="entry name" value="NadE_ammonia_dep"/>
    <property type="match status" value="1"/>
</dbReference>
<dbReference type="InterPro" id="IPR022310">
    <property type="entry name" value="NAD/GMP_synthase"/>
</dbReference>
<dbReference type="InterPro" id="IPR003694">
    <property type="entry name" value="NAD_synthase"/>
</dbReference>
<dbReference type="InterPro" id="IPR022926">
    <property type="entry name" value="NH(3)-dep_NAD(+)_synth"/>
</dbReference>
<dbReference type="InterPro" id="IPR014729">
    <property type="entry name" value="Rossmann-like_a/b/a_fold"/>
</dbReference>
<dbReference type="NCBIfam" id="TIGR00552">
    <property type="entry name" value="nadE"/>
    <property type="match status" value="1"/>
</dbReference>
<dbReference type="NCBIfam" id="NF001979">
    <property type="entry name" value="PRK00768.1"/>
    <property type="match status" value="1"/>
</dbReference>
<dbReference type="PANTHER" id="PTHR23090">
    <property type="entry name" value="NH 3 /GLUTAMINE-DEPENDENT NAD + SYNTHETASE"/>
    <property type="match status" value="1"/>
</dbReference>
<dbReference type="PANTHER" id="PTHR23090:SF7">
    <property type="entry name" value="NH(3)-DEPENDENT NAD(+) SYNTHETASE"/>
    <property type="match status" value="1"/>
</dbReference>
<dbReference type="Pfam" id="PF02540">
    <property type="entry name" value="NAD_synthase"/>
    <property type="match status" value="1"/>
</dbReference>
<dbReference type="SUPFAM" id="SSF52402">
    <property type="entry name" value="Adenine nucleotide alpha hydrolases-like"/>
    <property type="match status" value="1"/>
</dbReference>
<keyword id="KW-0067">ATP-binding</keyword>
<keyword id="KW-0436">Ligase</keyword>
<keyword id="KW-0460">Magnesium</keyword>
<keyword id="KW-0479">Metal-binding</keyword>
<keyword id="KW-0520">NAD</keyword>
<keyword id="KW-0547">Nucleotide-binding</keyword>
<reference key="1">
    <citation type="journal article" date="2009" name="Genome Biol.">
        <title>Genomic and genetic analyses of diversity and plant interactions of Pseudomonas fluorescens.</title>
        <authorList>
            <person name="Silby M.W."/>
            <person name="Cerdeno-Tarraga A.M."/>
            <person name="Vernikos G.S."/>
            <person name="Giddens S.R."/>
            <person name="Jackson R.W."/>
            <person name="Preston G.M."/>
            <person name="Zhang X.-X."/>
            <person name="Moon C.D."/>
            <person name="Gehrig S.M."/>
            <person name="Godfrey S.A.C."/>
            <person name="Knight C.G."/>
            <person name="Malone J.G."/>
            <person name="Robinson Z."/>
            <person name="Spiers A.J."/>
            <person name="Harris S."/>
            <person name="Challis G.L."/>
            <person name="Yaxley A.M."/>
            <person name="Harris D."/>
            <person name="Seeger K."/>
            <person name="Murphy L."/>
            <person name="Rutter S."/>
            <person name="Squares R."/>
            <person name="Quail M.A."/>
            <person name="Saunders E."/>
            <person name="Mavromatis K."/>
            <person name="Brettin T.S."/>
            <person name="Bentley S.D."/>
            <person name="Hothersall J."/>
            <person name="Stephens E."/>
            <person name="Thomas C.M."/>
            <person name="Parkhill J."/>
            <person name="Levy S.B."/>
            <person name="Rainey P.B."/>
            <person name="Thomson N.R."/>
        </authorList>
    </citation>
    <scope>NUCLEOTIDE SEQUENCE [LARGE SCALE GENOMIC DNA]</scope>
    <source>
        <strain>Pf0-1</strain>
    </source>
</reference>
<organism>
    <name type="scientific">Pseudomonas fluorescens (strain Pf0-1)</name>
    <dbReference type="NCBI Taxonomy" id="205922"/>
    <lineage>
        <taxon>Bacteria</taxon>
        <taxon>Pseudomonadati</taxon>
        <taxon>Pseudomonadota</taxon>
        <taxon>Gammaproteobacteria</taxon>
        <taxon>Pseudomonadales</taxon>
        <taxon>Pseudomonadaceae</taxon>
        <taxon>Pseudomonas</taxon>
    </lineage>
</organism>
<proteinExistence type="inferred from homology"/>